<feature type="chain" id="PRO_1000003357" description="3-deoxy-manno-octulosonate cytidylyltransferase">
    <location>
        <begin position="1"/>
        <end position="248"/>
    </location>
</feature>
<keyword id="KW-0963">Cytoplasm</keyword>
<keyword id="KW-0448">Lipopolysaccharide biosynthesis</keyword>
<keyword id="KW-0548">Nucleotidyltransferase</keyword>
<keyword id="KW-1185">Reference proteome</keyword>
<keyword id="KW-0808">Transferase</keyword>
<organism>
    <name type="scientific">Cronobacter sakazakii (strain ATCC BAA-894)</name>
    <name type="common">Enterobacter sakazakii</name>
    <dbReference type="NCBI Taxonomy" id="290339"/>
    <lineage>
        <taxon>Bacteria</taxon>
        <taxon>Pseudomonadati</taxon>
        <taxon>Pseudomonadota</taxon>
        <taxon>Gammaproteobacteria</taxon>
        <taxon>Enterobacterales</taxon>
        <taxon>Enterobacteriaceae</taxon>
        <taxon>Cronobacter</taxon>
    </lineage>
</organism>
<protein>
    <recommendedName>
        <fullName evidence="1">3-deoxy-manno-octulosonate cytidylyltransferase</fullName>
        <ecNumber evidence="1">2.7.7.38</ecNumber>
    </recommendedName>
    <alternativeName>
        <fullName evidence="1">CMP-2-keto-3-deoxyoctulosonic acid synthase</fullName>
        <shortName evidence="1">CKS</shortName>
        <shortName evidence="1">CMP-KDO synthase</shortName>
    </alternativeName>
</protein>
<evidence type="ECO:0000255" key="1">
    <source>
        <dbReference type="HAMAP-Rule" id="MF_00057"/>
    </source>
</evidence>
<accession>A7MEV1</accession>
<dbReference type="EC" id="2.7.7.38" evidence="1"/>
<dbReference type="EMBL" id="CP000783">
    <property type="protein sequence ID" value="ABU77672.1"/>
    <property type="molecule type" value="Genomic_DNA"/>
</dbReference>
<dbReference type="RefSeq" id="WP_004385497.1">
    <property type="nucleotide sequence ID" value="NC_009778.1"/>
</dbReference>
<dbReference type="SMR" id="A7MEV1"/>
<dbReference type="KEGG" id="esa:ESA_02426"/>
<dbReference type="PATRIC" id="fig|290339.8.peg.2156"/>
<dbReference type="HOGENOM" id="CLU_065038_1_0_6"/>
<dbReference type="UniPathway" id="UPA00030"/>
<dbReference type="UniPathway" id="UPA00358">
    <property type="reaction ID" value="UER00476"/>
</dbReference>
<dbReference type="Proteomes" id="UP000000260">
    <property type="component" value="Chromosome"/>
</dbReference>
<dbReference type="GO" id="GO:0005829">
    <property type="term" value="C:cytosol"/>
    <property type="evidence" value="ECO:0007669"/>
    <property type="project" value="TreeGrafter"/>
</dbReference>
<dbReference type="GO" id="GO:0008690">
    <property type="term" value="F:3-deoxy-manno-octulosonate cytidylyltransferase activity"/>
    <property type="evidence" value="ECO:0007669"/>
    <property type="project" value="UniProtKB-UniRule"/>
</dbReference>
<dbReference type="GO" id="GO:0033468">
    <property type="term" value="P:CMP-keto-3-deoxy-D-manno-octulosonic acid biosynthetic process"/>
    <property type="evidence" value="ECO:0007669"/>
    <property type="project" value="UniProtKB-UniRule"/>
</dbReference>
<dbReference type="GO" id="GO:0009103">
    <property type="term" value="P:lipopolysaccharide biosynthetic process"/>
    <property type="evidence" value="ECO:0007669"/>
    <property type="project" value="UniProtKB-UniRule"/>
</dbReference>
<dbReference type="CDD" id="cd02517">
    <property type="entry name" value="CMP-KDO-Synthetase"/>
    <property type="match status" value="1"/>
</dbReference>
<dbReference type="FunFam" id="3.90.550.10:FF:000011">
    <property type="entry name" value="3-deoxy-manno-octulosonate cytidylyltransferase"/>
    <property type="match status" value="1"/>
</dbReference>
<dbReference type="Gene3D" id="3.90.550.10">
    <property type="entry name" value="Spore Coat Polysaccharide Biosynthesis Protein SpsA, Chain A"/>
    <property type="match status" value="1"/>
</dbReference>
<dbReference type="HAMAP" id="MF_00057">
    <property type="entry name" value="KdsB"/>
    <property type="match status" value="1"/>
</dbReference>
<dbReference type="InterPro" id="IPR003329">
    <property type="entry name" value="Cytidylyl_trans"/>
</dbReference>
<dbReference type="InterPro" id="IPR004528">
    <property type="entry name" value="KdsB"/>
</dbReference>
<dbReference type="InterPro" id="IPR029044">
    <property type="entry name" value="Nucleotide-diphossugar_trans"/>
</dbReference>
<dbReference type="NCBIfam" id="TIGR00466">
    <property type="entry name" value="kdsB"/>
    <property type="match status" value="1"/>
</dbReference>
<dbReference type="NCBIfam" id="NF003950">
    <property type="entry name" value="PRK05450.1-3"/>
    <property type="match status" value="1"/>
</dbReference>
<dbReference type="NCBIfam" id="NF003952">
    <property type="entry name" value="PRK05450.1-5"/>
    <property type="match status" value="1"/>
</dbReference>
<dbReference type="NCBIfam" id="NF009905">
    <property type="entry name" value="PRK13368.1"/>
    <property type="match status" value="1"/>
</dbReference>
<dbReference type="PANTHER" id="PTHR42866">
    <property type="entry name" value="3-DEOXY-MANNO-OCTULOSONATE CYTIDYLYLTRANSFERASE"/>
    <property type="match status" value="1"/>
</dbReference>
<dbReference type="PANTHER" id="PTHR42866:SF2">
    <property type="entry name" value="3-DEOXY-MANNO-OCTULOSONATE CYTIDYLYLTRANSFERASE, MITOCHONDRIAL"/>
    <property type="match status" value="1"/>
</dbReference>
<dbReference type="Pfam" id="PF02348">
    <property type="entry name" value="CTP_transf_3"/>
    <property type="match status" value="1"/>
</dbReference>
<dbReference type="SUPFAM" id="SSF53448">
    <property type="entry name" value="Nucleotide-diphospho-sugar transferases"/>
    <property type="match status" value="1"/>
</dbReference>
<gene>
    <name evidence="1" type="primary">kdsB</name>
    <name type="ordered locus">ESA_02426</name>
</gene>
<comment type="function">
    <text evidence="1">Activates KDO (a required 8-carbon sugar) for incorporation into bacterial lipopolysaccharide in Gram-negative bacteria.</text>
</comment>
<comment type="catalytic activity">
    <reaction evidence="1">
        <text>3-deoxy-alpha-D-manno-oct-2-ulosonate + CTP = CMP-3-deoxy-beta-D-manno-octulosonate + diphosphate</text>
        <dbReference type="Rhea" id="RHEA:23448"/>
        <dbReference type="ChEBI" id="CHEBI:33019"/>
        <dbReference type="ChEBI" id="CHEBI:37563"/>
        <dbReference type="ChEBI" id="CHEBI:85986"/>
        <dbReference type="ChEBI" id="CHEBI:85987"/>
        <dbReference type="EC" id="2.7.7.38"/>
    </reaction>
</comment>
<comment type="pathway">
    <text evidence="1">Nucleotide-sugar biosynthesis; CMP-3-deoxy-D-manno-octulosonate biosynthesis; CMP-3-deoxy-D-manno-octulosonate from 3-deoxy-D-manno-octulosonate and CTP: step 1/1.</text>
</comment>
<comment type="pathway">
    <text evidence="1">Bacterial outer membrane biogenesis; lipopolysaccharide biosynthesis.</text>
</comment>
<comment type="subcellular location">
    <subcellularLocation>
        <location evidence="1">Cytoplasm</location>
    </subcellularLocation>
</comment>
<comment type="similarity">
    <text evidence="1">Belongs to the KdsB family.</text>
</comment>
<proteinExistence type="inferred from homology"/>
<sequence>MSFVVIIPARYASTRLPGKPLVDINGKPMIVHVLERARESGAARIIVATDHPDVARAIEAAGGEVCMTRADHQSGTERLAEVVEKCGFADDTVIVNVQGDEPMIPPAIIRQVAENLASAQAGMATLAVPVHDAQEAFNPNAVKVVMDAQGYALYFSRATIPWDRDRFAQSRDTIGDSFLRHIGIYGYRAGFIRRYVTWPASPLEQIEMLEQLRVLWHGEKIHVAVAAVVPGTGVDTPEDLERVRAEMR</sequence>
<name>KDSB_CROS8</name>
<reference key="1">
    <citation type="journal article" date="2010" name="PLoS ONE">
        <title>Genome sequence of Cronobacter sakazakii BAA-894 and comparative genomic hybridization analysis with other Cronobacter species.</title>
        <authorList>
            <person name="Kucerova E."/>
            <person name="Clifton S.W."/>
            <person name="Xia X.Q."/>
            <person name="Long F."/>
            <person name="Porwollik S."/>
            <person name="Fulton L."/>
            <person name="Fronick C."/>
            <person name="Minx P."/>
            <person name="Kyung K."/>
            <person name="Warren W."/>
            <person name="Fulton R."/>
            <person name="Feng D."/>
            <person name="Wollam A."/>
            <person name="Shah N."/>
            <person name="Bhonagiri V."/>
            <person name="Nash W.E."/>
            <person name="Hallsworth-Pepin K."/>
            <person name="Wilson R.K."/>
            <person name="McClelland M."/>
            <person name="Forsythe S.J."/>
        </authorList>
    </citation>
    <scope>NUCLEOTIDE SEQUENCE [LARGE SCALE GENOMIC DNA]</scope>
    <source>
        <strain>ATCC BAA-894</strain>
    </source>
</reference>